<evidence type="ECO:0000250" key="1"/>
<evidence type="ECO:0000256" key="2">
    <source>
        <dbReference type="SAM" id="MobiDB-lite"/>
    </source>
</evidence>
<evidence type="ECO:0000305" key="3"/>
<proteinExistence type="inferred from homology"/>
<protein>
    <recommendedName>
        <fullName>DNA polymerase catalytic subunit</fullName>
        <ecNumber>2.7.7.7</ecNumber>
        <ecNumber>3.1.26.4</ecNumber>
    </recommendedName>
</protein>
<dbReference type="EC" id="2.7.7.7"/>
<dbReference type="EC" id="3.1.26.4"/>
<dbReference type="EMBL" id="AF148805">
    <property type="protein sequence ID" value="ABD28853.1"/>
    <property type="molecule type" value="Genomic_DNA"/>
</dbReference>
<dbReference type="RefSeq" id="YP_001129355.1">
    <property type="nucleotide sequence ID" value="NC_009333.1"/>
</dbReference>
<dbReference type="SMR" id="Q2HRD0"/>
<dbReference type="DNASU" id="4961513"/>
<dbReference type="GeneID" id="4961513"/>
<dbReference type="KEGG" id="vg:4961513"/>
<dbReference type="Proteomes" id="UP000000942">
    <property type="component" value="Segment"/>
</dbReference>
<dbReference type="GO" id="GO:0042025">
    <property type="term" value="C:host cell nucleus"/>
    <property type="evidence" value="ECO:0007669"/>
    <property type="project" value="UniProtKB-SubCell"/>
</dbReference>
<dbReference type="GO" id="GO:0003677">
    <property type="term" value="F:DNA binding"/>
    <property type="evidence" value="ECO:0007669"/>
    <property type="project" value="UniProtKB-KW"/>
</dbReference>
<dbReference type="GO" id="GO:0003887">
    <property type="term" value="F:DNA-directed DNA polymerase activity"/>
    <property type="evidence" value="ECO:0007669"/>
    <property type="project" value="UniProtKB-KW"/>
</dbReference>
<dbReference type="GO" id="GO:0000166">
    <property type="term" value="F:nucleotide binding"/>
    <property type="evidence" value="ECO:0007669"/>
    <property type="project" value="InterPro"/>
</dbReference>
<dbReference type="GO" id="GO:0004523">
    <property type="term" value="F:RNA-DNA hybrid ribonuclease activity"/>
    <property type="evidence" value="ECO:0007669"/>
    <property type="project" value="UniProtKB-EC"/>
</dbReference>
<dbReference type="GO" id="GO:0039686">
    <property type="term" value="P:bidirectional double-stranded viral DNA replication"/>
    <property type="evidence" value="ECO:0000314"/>
    <property type="project" value="UniProtKB"/>
</dbReference>
<dbReference type="GO" id="GO:0006261">
    <property type="term" value="P:DNA-templated DNA replication"/>
    <property type="evidence" value="ECO:0007669"/>
    <property type="project" value="TreeGrafter"/>
</dbReference>
<dbReference type="FunFam" id="3.30.420.10:FF:000004">
    <property type="entry name" value="DNA polymerase"/>
    <property type="match status" value="1"/>
</dbReference>
<dbReference type="Gene3D" id="1.10.132.60">
    <property type="entry name" value="DNA polymerase family B, C-terminal domain"/>
    <property type="match status" value="1"/>
</dbReference>
<dbReference type="Gene3D" id="3.30.342.10">
    <property type="entry name" value="DNA Polymerase, chain B, domain 1"/>
    <property type="match status" value="1"/>
</dbReference>
<dbReference type="Gene3D" id="1.10.287.690">
    <property type="entry name" value="Helix hairpin bin"/>
    <property type="match status" value="1"/>
</dbReference>
<dbReference type="Gene3D" id="3.90.1600.10">
    <property type="entry name" value="Palm domain of DNA polymerase"/>
    <property type="match status" value="1"/>
</dbReference>
<dbReference type="Gene3D" id="3.30.420.10">
    <property type="entry name" value="Ribonuclease H-like superfamily/Ribonuclease H"/>
    <property type="match status" value="1"/>
</dbReference>
<dbReference type="InterPro" id="IPR006172">
    <property type="entry name" value="DNA-dir_DNA_pol_B"/>
</dbReference>
<dbReference type="InterPro" id="IPR017964">
    <property type="entry name" value="DNA-dir_DNA_pol_B_CS"/>
</dbReference>
<dbReference type="InterPro" id="IPR006133">
    <property type="entry name" value="DNA-dir_DNA_pol_B_exonuc"/>
</dbReference>
<dbReference type="InterPro" id="IPR006134">
    <property type="entry name" value="DNA-dir_DNA_pol_B_multi_dom"/>
</dbReference>
<dbReference type="InterPro" id="IPR043502">
    <property type="entry name" value="DNA/RNA_pol_sf"/>
</dbReference>
<dbReference type="InterPro" id="IPR042087">
    <property type="entry name" value="DNA_pol_B_thumb"/>
</dbReference>
<dbReference type="InterPro" id="IPR023211">
    <property type="entry name" value="DNA_pol_palm_dom_sf"/>
</dbReference>
<dbReference type="InterPro" id="IPR050240">
    <property type="entry name" value="DNA_pol_type-B"/>
</dbReference>
<dbReference type="InterPro" id="IPR012337">
    <property type="entry name" value="RNaseH-like_sf"/>
</dbReference>
<dbReference type="InterPro" id="IPR036397">
    <property type="entry name" value="RNaseH_sf"/>
</dbReference>
<dbReference type="PANTHER" id="PTHR10322">
    <property type="entry name" value="DNA POLYMERASE CATALYTIC SUBUNIT"/>
    <property type="match status" value="1"/>
</dbReference>
<dbReference type="PANTHER" id="PTHR10322:SF23">
    <property type="entry name" value="DNA POLYMERASE DELTA CATALYTIC SUBUNIT"/>
    <property type="match status" value="1"/>
</dbReference>
<dbReference type="Pfam" id="PF00136">
    <property type="entry name" value="DNA_pol_B"/>
    <property type="match status" value="1"/>
</dbReference>
<dbReference type="Pfam" id="PF03104">
    <property type="entry name" value="DNA_pol_B_exo1"/>
    <property type="match status" value="1"/>
</dbReference>
<dbReference type="PRINTS" id="PR00106">
    <property type="entry name" value="DNAPOLB"/>
</dbReference>
<dbReference type="SMART" id="SM00486">
    <property type="entry name" value="POLBc"/>
    <property type="match status" value="1"/>
</dbReference>
<dbReference type="SUPFAM" id="SSF56672">
    <property type="entry name" value="DNA/RNA polymerases"/>
    <property type="match status" value="1"/>
</dbReference>
<dbReference type="SUPFAM" id="SSF53098">
    <property type="entry name" value="Ribonuclease H-like"/>
    <property type="match status" value="1"/>
</dbReference>
<dbReference type="PROSITE" id="PS00116">
    <property type="entry name" value="DNA_POLYMERASE_B"/>
    <property type="match status" value="1"/>
</dbReference>
<comment type="function">
    <text evidence="1">Replicates viral genomic DNA. The replication complex is composed of six viral proteins: the DNA polymerase, processivity factor, primase, primase-associated factor, helicase, and ssDNA-binding protein. Additionally, the polymerase contains an intrinsic ribonuclease H (RNase H) activity that specifically degrades RNA/DNA heteroduplexes or duplex DNA substrates in the 5' to 3' direction. Therefore, it can catalyze the excision of the RNA primers that initiate the synthesis of Okazaki fragments at a replication fork during viral DNA replication (By similarity).</text>
</comment>
<comment type="catalytic activity">
    <reaction>
        <text>DNA(n) + a 2'-deoxyribonucleoside 5'-triphosphate = DNA(n+1) + diphosphate</text>
        <dbReference type="Rhea" id="RHEA:22508"/>
        <dbReference type="Rhea" id="RHEA-COMP:17339"/>
        <dbReference type="Rhea" id="RHEA-COMP:17340"/>
        <dbReference type="ChEBI" id="CHEBI:33019"/>
        <dbReference type="ChEBI" id="CHEBI:61560"/>
        <dbReference type="ChEBI" id="CHEBI:173112"/>
        <dbReference type="EC" id="2.7.7.7"/>
    </reaction>
</comment>
<comment type="catalytic activity">
    <reaction>
        <text>Endonucleolytic cleavage to 5'-phosphomonoester.</text>
        <dbReference type="EC" id="3.1.26.4"/>
    </reaction>
</comment>
<comment type="subunit">
    <text evidence="1">Forms a complex with the ssDNA-binding protein, the DNA polymerase processivity factor, and the alkaline exonuclease. Interacts with the putative helicase-primase complex subunit; this interaction may coordinate leading and lagging strand DNA synthesis at the replication fork (By similarity).</text>
</comment>
<comment type="subcellular location">
    <subcellularLocation>
        <location evidence="3">Host nucleus</location>
    </subcellularLocation>
    <text evidence="1">The protein is present at discrete sites in nuclei, called replication compartments where viral DNA replication occurs.</text>
</comment>
<comment type="similarity">
    <text evidence="3">Belongs to the DNA polymerase type-B family.</text>
</comment>
<keyword id="KW-0235">DNA replication</keyword>
<keyword id="KW-0238">DNA-binding</keyword>
<keyword id="KW-0239">DNA-directed DNA polymerase</keyword>
<keyword id="KW-0255">Endonuclease</keyword>
<keyword id="KW-1048">Host nucleus</keyword>
<keyword id="KW-0378">Hydrolase</keyword>
<keyword id="KW-0511">Multifunctional enzyme</keyword>
<keyword id="KW-0540">Nuclease</keyword>
<keyword id="KW-0548">Nucleotidyltransferase</keyword>
<keyword id="KW-1185">Reference proteome</keyword>
<keyword id="KW-0808">Transferase</keyword>
<keyword id="KW-1194">Viral DNA replication</keyword>
<organism>
    <name type="scientific">Human herpesvirus 8 type P (isolate GK18)</name>
    <name type="common">HHV-8</name>
    <name type="synonym">Kaposi's sarcoma-associated herpesvirus</name>
    <dbReference type="NCBI Taxonomy" id="868565"/>
    <lineage>
        <taxon>Viruses</taxon>
        <taxon>Duplodnaviria</taxon>
        <taxon>Heunggongvirae</taxon>
        <taxon>Peploviricota</taxon>
        <taxon>Herviviricetes</taxon>
        <taxon>Herpesvirales</taxon>
        <taxon>Orthoherpesviridae</taxon>
        <taxon>Gammaherpesvirinae</taxon>
        <taxon>Rhadinovirus</taxon>
        <taxon>Rhadinovirus humangamma8</taxon>
        <taxon>Human herpesvirus 8</taxon>
    </lineage>
</organism>
<feature type="chain" id="PRO_0000423802" description="DNA polymerase catalytic subunit">
    <location>
        <begin position="1"/>
        <end position="1012"/>
    </location>
</feature>
<feature type="region of interest" description="Disordered" evidence="2">
    <location>
        <begin position="1"/>
        <end position="31"/>
    </location>
</feature>
<feature type="compositionally biased region" description="Low complexity" evidence="2">
    <location>
        <begin position="21"/>
        <end position="31"/>
    </location>
</feature>
<organismHost>
    <name type="scientific">Homo sapiens</name>
    <name type="common">Human</name>
    <dbReference type="NCBI Taxonomy" id="9606"/>
</organismHost>
<sequence length="1012" mass="113326">MDFFNPFIDPTRGGPRNTVRQPTPSQSPTVPSETRVCRLIPACFQTPGRPGVVAVDTTFPPTYFQGPKRGEVFAGETGSIWKTRRGQARNAPMSHLIFHVYDIVETTYTADRCEDVPFSFQTDIIPSGTVLKLLGRTLDGASVCVNVFRQRCYFYTLAPQGVNLTHVLQQALQAGFGRASCGFSTEPVRKKILRAYDTQQYAVQKITLSSSPMMRTLSDRLTTCGCEVFESNVDAIRRFVLDHGFSTFGWYECSNPAPRTQARDSWTELEFDCSWEDLKFIPERTEWPPYTILSFDIECMGEKGFPNATQDEDMIIQISCVLHTVGNDKPYTRMLLGLGTCDPLPGVEVFEFPSEYDMLAAFLSMLRDYNVEFITGYNIANFDLPYIIARATQVYDFKLQDFTKIKTGSVFEVHQPRGGSDGGNFMRSQSKVKISGIVPIDMYQVCREKLSLSDYKLDTVAKQCLGRQKDDISYKDIPPLFKSGPDGRAKVGNYCVIDSVLVMDLLLRFQTHVEISEIAKLAKIPTRRVLTDGQQIRVFSCLLEAAATEGYILPVPKGDAVSGYQGATVISPSPGFYDDPVLVVDFASLYPSIIQAHNLCYSTLIPGDSLHLHPHLSPDDYETFVLSGGPVHFVKKHKRESLLAKLLTVWLAKRKEIRKTLASCTDPALKTILDKQQLAIKVTCNAVYGFTGVASGILPCLNIAETVTLQGRKMLERSQAFVEAISPERLAGLLRRPVDVSPDARFKVIYGDTDSLFICCMGFNMDSVSDFAEELASITTNTLFRSPIKLEAEKIFKCLLLLTKKRYVGVLSDDKVLMKGVDLIRKTACRFVQEKSSQVLDLILREPSVKAAAKLISGQATDWVYREGLPEGFVKIIQVLNASHRELCERSVPVDKLTFTTELSRPLADYKTQNLPHLTVYQKLQARQEELPQIHDRIPYVFVDAPGSLRSELAEHPEYVKQHGLRVAVDLYFDKLVHAVANIIQCLFQNNTSATVAILYNFLDIPVTFPTP</sequence>
<accession>Q2HRD0</accession>
<reference key="1">
    <citation type="journal article" date="1999" name="J. Virol.">
        <title>Identification of a spliced gene from Kaposi's sarcoma-associated herpesvirus encoding a protein with similarities to latent membrane proteins 1 and 2A of Epstein-Barr virus.</title>
        <authorList>
            <person name="Glenn M."/>
            <person name="Rainbow L."/>
            <person name="Aurade F."/>
            <person name="Davison A."/>
            <person name="Schulz T.F."/>
        </authorList>
    </citation>
    <scope>NUCLEOTIDE SEQUENCE [LARGE SCALE GENOMIC DNA]</scope>
</reference>
<reference key="2">
    <citation type="journal article" date="2006" name="J. Gen. Virol.">
        <title>Kaposi's sarcoma-associated herpesvirus immune modulation: an overview.</title>
        <authorList>
            <person name="Rezaee S.A.R."/>
            <person name="Cunningham C."/>
            <person name="Davison A.J."/>
            <person name="Blackbourn D.J."/>
        </authorList>
    </citation>
    <scope>NUCLEOTIDE SEQUENCE [LARGE SCALE GENOMIC DNA]</scope>
</reference>
<gene>
    <name type="primary">ORF9</name>
</gene>
<name>DPOL_HHV8P</name>